<proteinExistence type="inferred from homology"/>
<accession>Q1I350</accession>
<organism>
    <name type="scientific">Pseudomonas entomophila (strain L48)</name>
    <dbReference type="NCBI Taxonomy" id="384676"/>
    <lineage>
        <taxon>Bacteria</taxon>
        <taxon>Pseudomonadati</taxon>
        <taxon>Pseudomonadota</taxon>
        <taxon>Gammaproteobacteria</taxon>
        <taxon>Pseudomonadales</taxon>
        <taxon>Pseudomonadaceae</taxon>
        <taxon>Pseudomonas</taxon>
    </lineage>
</organism>
<evidence type="ECO:0000255" key="1">
    <source>
        <dbReference type="HAMAP-Rule" id="MF_00346"/>
    </source>
</evidence>
<reference key="1">
    <citation type="journal article" date="2006" name="Nat. Biotechnol.">
        <title>Complete genome sequence of the entomopathogenic and metabolically versatile soil bacterium Pseudomonas entomophila.</title>
        <authorList>
            <person name="Vodovar N."/>
            <person name="Vallenet D."/>
            <person name="Cruveiller S."/>
            <person name="Rouy Z."/>
            <person name="Barbe V."/>
            <person name="Acosta C."/>
            <person name="Cattolico L."/>
            <person name="Jubin C."/>
            <person name="Lajus A."/>
            <person name="Segurens B."/>
            <person name="Vacherie B."/>
            <person name="Wincker P."/>
            <person name="Weissenbach J."/>
            <person name="Lemaitre B."/>
            <person name="Medigue C."/>
            <person name="Boccard F."/>
        </authorList>
    </citation>
    <scope>NUCLEOTIDE SEQUENCE [LARGE SCALE GENOMIC DNA]</scope>
    <source>
        <strain>L48</strain>
    </source>
</reference>
<protein>
    <recommendedName>
        <fullName evidence="1">UPF0149 protein PSEEN5316</fullName>
    </recommendedName>
</protein>
<gene>
    <name type="ordered locus">PSEEN5316</name>
</gene>
<comment type="similarity">
    <text evidence="1">Belongs to the UPF0149 family.</text>
</comment>
<name>Y5316_PSEE4</name>
<dbReference type="EMBL" id="CT573326">
    <property type="protein sequence ID" value="CAK17936.1"/>
    <property type="molecule type" value="Genomic_DNA"/>
</dbReference>
<dbReference type="RefSeq" id="WP_011536294.1">
    <property type="nucleotide sequence ID" value="NC_008027.1"/>
</dbReference>
<dbReference type="SMR" id="Q1I350"/>
<dbReference type="STRING" id="384676.PSEEN5316"/>
<dbReference type="GeneID" id="32808235"/>
<dbReference type="KEGG" id="pen:PSEEN5316"/>
<dbReference type="eggNOG" id="COG3079">
    <property type="taxonomic scope" value="Bacteria"/>
</dbReference>
<dbReference type="HOGENOM" id="CLU_085336_0_1_6"/>
<dbReference type="OrthoDB" id="9783391at2"/>
<dbReference type="Proteomes" id="UP000000658">
    <property type="component" value="Chromosome"/>
</dbReference>
<dbReference type="GO" id="GO:0005829">
    <property type="term" value="C:cytosol"/>
    <property type="evidence" value="ECO:0007669"/>
    <property type="project" value="TreeGrafter"/>
</dbReference>
<dbReference type="Gene3D" id="1.20.120.740">
    <property type="entry name" value="YgfB uncharacterised protein family UPF0149, PF03695"/>
    <property type="match status" value="1"/>
</dbReference>
<dbReference type="HAMAP" id="MF_00346">
    <property type="entry name" value="UPF0149"/>
    <property type="match status" value="1"/>
</dbReference>
<dbReference type="InterPro" id="IPR011978">
    <property type="entry name" value="YgfB-like"/>
</dbReference>
<dbReference type="InterPro" id="IPR036255">
    <property type="entry name" value="YgfB-like_sf"/>
</dbReference>
<dbReference type="NCBIfam" id="NF002562">
    <property type="entry name" value="PRK02166.1"/>
    <property type="match status" value="1"/>
</dbReference>
<dbReference type="PANTHER" id="PTHR37528">
    <property type="entry name" value="UPF0149 PROTEIN YGFB"/>
    <property type="match status" value="1"/>
</dbReference>
<dbReference type="PANTHER" id="PTHR37528:SF1">
    <property type="entry name" value="UPF0149 PROTEIN YGFB"/>
    <property type="match status" value="1"/>
</dbReference>
<dbReference type="Pfam" id="PF03695">
    <property type="entry name" value="UPF0149"/>
    <property type="match status" value="1"/>
</dbReference>
<dbReference type="SUPFAM" id="SSF101327">
    <property type="entry name" value="YgfB-like"/>
    <property type="match status" value="1"/>
</dbReference>
<sequence>MPNTQSPYIAFAMLLSSNGHPVTPAELHGLLIGRSCAGAGFDADAWLADAAQLLETEPGDTVRNALVGLQEMVKAELTGEDVAIVLLLPSDDAALADRAAALGQWCQGFITGFGLNAGGKDLSTDAKEVLQDLVAISQVQEALEESEDGENDYMEVMEYLRVAPLLLYTELAKPEAPATKPSLH</sequence>
<feature type="chain" id="PRO_1000013046" description="UPF0149 protein PSEEN5316">
    <location>
        <begin position="1"/>
        <end position="184"/>
    </location>
</feature>